<evidence type="ECO:0000255" key="1">
    <source>
        <dbReference type="HAMAP-Rule" id="MF_00294"/>
    </source>
</evidence>
<evidence type="ECO:0000305" key="2"/>
<gene>
    <name evidence="1" type="primary">rpmG</name>
    <name type="ordered locus">BceJ2315_26540</name>
    <name type="ORF">BCAL2715</name>
</gene>
<reference key="1">
    <citation type="journal article" date="2009" name="J. Bacteriol.">
        <title>The genome of Burkholderia cenocepacia J2315, an epidemic pathogen of cystic fibrosis patients.</title>
        <authorList>
            <person name="Holden M.T."/>
            <person name="Seth-Smith H.M."/>
            <person name="Crossman L.C."/>
            <person name="Sebaihia M."/>
            <person name="Bentley S.D."/>
            <person name="Cerdeno-Tarraga A.M."/>
            <person name="Thomson N.R."/>
            <person name="Bason N."/>
            <person name="Quail M.A."/>
            <person name="Sharp S."/>
            <person name="Cherevach I."/>
            <person name="Churcher C."/>
            <person name="Goodhead I."/>
            <person name="Hauser H."/>
            <person name="Holroyd N."/>
            <person name="Mungall K."/>
            <person name="Scott P."/>
            <person name="Walker D."/>
            <person name="White B."/>
            <person name="Rose H."/>
            <person name="Iversen P."/>
            <person name="Mil-Homens D."/>
            <person name="Rocha E.P."/>
            <person name="Fialho A.M."/>
            <person name="Baldwin A."/>
            <person name="Dowson C."/>
            <person name="Barrell B.G."/>
            <person name="Govan J.R."/>
            <person name="Vandamme P."/>
            <person name="Hart C.A."/>
            <person name="Mahenthiralingam E."/>
            <person name="Parkhill J."/>
        </authorList>
    </citation>
    <scope>NUCLEOTIDE SEQUENCE [LARGE SCALE GENOMIC DNA]</scope>
    <source>
        <strain>ATCC BAA-245 / DSM 16553 / LMG 16656 / NCTC 13227 / J2315 / CF5610</strain>
    </source>
</reference>
<proteinExistence type="inferred from homology"/>
<accession>B4E8Y8</accession>
<keyword id="KW-0687">Ribonucleoprotein</keyword>
<keyword id="KW-0689">Ribosomal protein</keyword>
<organism>
    <name type="scientific">Burkholderia cenocepacia (strain ATCC BAA-245 / DSM 16553 / LMG 16656 / NCTC 13227 / J2315 / CF5610)</name>
    <name type="common">Burkholderia cepacia (strain J2315)</name>
    <dbReference type="NCBI Taxonomy" id="216591"/>
    <lineage>
        <taxon>Bacteria</taxon>
        <taxon>Pseudomonadati</taxon>
        <taxon>Pseudomonadota</taxon>
        <taxon>Betaproteobacteria</taxon>
        <taxon>Burkholderiales</taxon>
        <taxon>Burkholderiaceae</taxon>
        <taxon>Burkholderia</taxon>
        <taxon>Burkholderia cepacia complex</taxon>
    </lineage>
</organism>
<comment type="similarity">
    <text evidence="1">Belongs to the bacterial ribosomal protein bL33 family.</text>
</comment>
<name>RL33_BURCJ</name>
<dbReference type="EMBL" id="AM747720">
    <property type="protein sequence ID" value="CAR53016.1"/>
    <property type="molecule type" value="Genomic_DNA"/>
</dbReference>
<dbReference type="RefSeq" id="WP_006488954.1">
    <property type="nucleotide sequence ID" value="NC_011000.1"/>
</dbReference>
<dbReference type="SMR" id="B4E8Y8"/>
<dbReference type="KEGG" id="bcj:BCAL2715"/>
<dbReference type="eggNOG" id="COG0267">
    <property type="taxonomic scope" value="Bacteria"/>
</dbReference>
<dbReference type="HOGENOM" id="CLU_190949_1_1_4"/>
<dbReference type="BioCyc" id="BCEN216591:G1G1V-3008-MONOMER"/>
<dbReference type="Proteomes" id="UP000001035">
    <property type="component" value="Chromosome 1"/>
</dbReference>
<dbReference type="GO" id="GO:0022625">
    <property type="term" value="C:cytosolic large ribosomal subunit"/>
    <property type="evidence" value="ECO:0007669"/>
    <property type="project" value="TreeGrafter"/>
</dbReference>
<dbReference type="GO" id="GO:0003735">
    <property type="term" value="F:structural constituent of ribosome"/>
    <property type="evidence" value="ECO:0007669"/>
    <property type="project" value="InterPro"/>
</dbReference>
<dbReference type="GO" id="GO:0006412">
    <property type="term" value="P:translation"/>
    <property type="evidence" value="ECO:0007669"/>
    <property type="project" value="UniProtKB-UniRule"/>
</dbReference>
<dbReference type="FunFam" id="2.20.28.120:FF:000001">
    <property type="entry name" value="50S ribosomal protein L33"/>
    <property type="match status" value="1"/>
</dbReference>
<dbReference type="Gene3D" id="2.20.28.120">
    <property type="entry name" value="Ribosomal protein L33"/>
    <property type="match status" value="1"/>
</dbReference>
<dbReference type="HAMAP" id="MF_00294">
    <property type="entry name" value="Ribosomal_bL33"/>
    <property type="match status" value="1"/>
</dbReference>
<dbReference type="InterPro" id="IPR001705">
    <property type="entry name" value="Ribosomal_bL33"/>
</dbReference>
<dbReference type="InterPro" id="IPR018264">
    <property type="entry name" value="Ribosomal_bL33_CS"/>
</dbReference>
<dbReference type="InterPro" id="IPR038584">
    <property type="entry name" value="Ribosomal_bL33_sf"/>
</dbReference>
<dbReference type="InterPro" id="IPR011332">
    <property type="entry name" value="Ribosomal_zn-bd"/>
</dbReference>
<dbReference type="NCBIfam" id="NF001860">
    <property type="entry name" value="PRK00595.1"/>
    <property type="match status" value="1"/>
</dbReference>
<dbReference type="NCBIfam" id="TIGR01023">
    <property type="entry name" value="rpmG_bact"/>
    <property type="match status" value="1"/>
</dbReference>
<dbReference type="PANTHER" id="PTHR15238">
    <property type="entry name" value="54S RIBOSOMAL PROTEIN L39, MITOCHONDRIAL"/>
    <property type="match status" value="1"/>
</dbReference>
<dbReference type="PANTHER" id="PTHR15238:SF1">
    <property type="entry name" value="LARGE RIBOSOMAL SUBUNIT PROTEIN BL33M"/>
    <property type="match status" value="1"/>
</dbReference>
<dbReference type="Pfam" id="PF00471">
    <property type="entry name" value="Ribosomal_L33"/>
    <property type="match status" value="1"/>
</dbReference>
<dbReference type="SUPFAM" id="SSF57829">
    <property type="entry name" value="Zn-binding ribosomal proteins"/>
    <property type="match status" value="1"/>
</dbReference>
<dbReference type="PROSITE" id="PS00582">
    <property type="entry name" value="RIBOSOMAL_L33"/>
    <property type="match status" value="1"/>
</dbReference>
<feature type="chain" id="PRO_1000115105" description="Large ribosomal subunit protein bL33">
    <location>
        <begin position="1"/>
        <end position="55"/>
    </location>
</feature>
<protein>
    <recommendedName>
        <fullName evidence="1">Large ribosomal subunit protein bL33</fullName>
    </recommendedName>
    <alternativeName>
        <fullName evidence="2">50S ribosomal protein L33</fullName>
    </alternativeName>
</protein>
<sequence length="55" mass="6401">MAKGARDKIKLESTAGTGHFYTTTKNKRNMPEKMAIKKFDPVVRKRVEYKETKIK</sequence>